<dbReference type="EMBL" id="BT021832">
    <property type="protein sequence ID" value="AAX46679.1"/>
    <property type="molecule type" value="mRNA"/>
</dbReference>
<dbReference type="RefSeq" id="XP_024856908.1">
    <property type="nucleotide sequence ID" value="XM_025001140.2"/>
</dbReference>
<dbReference type="SMR" id="Q58CW5"/>
<dbReference type="FunCoup" id="Q58CW5">
    <property type="interactions" value="1085"/>
</dbReference>
<dbReference type="STRING" id="9913.ENSBTAP00000015387"/>
<dbReference type="PaxDb" id="9913-ENSBTAP00000015387"/>
<dbReference type="Ensembl" id="ENSBTAT00000076368.2">
    <property type="protein sequence ID" value="ENSBTAP00000057114.1"/>
    <property type="gene ID" value="ENSBTAG00000035081.4"/>
</dbReference>
<dbReference type="GeneID" id="513593"/>
<dbReference type="VEuPathDB" id="HostDB:ENSBTAG00000035081"/>
<dbReference type="VGNC" id="VGNC:106920">
    <property type="gene designation" value="SERINC2"/>
</dbReference>
<dbReference type="eggNOG" id="KOG2592">
    <property type="taxonomic scope" value="Eukaryota"/>
</dbReference>
<dbReference type="GeneTree" id="ENSGT01030000234623"/>
<dbReference type="HOGENOM" id="CLU_029574_5_1_1"/>
<dbReference type="InParanoid" id="Q58CW5"/>
<dbReference type="OMA" id="ECCESEK"/>
<dbReference type="Reactome" id="R-BTA-977347">
    <property type="pathway name" value="Serine biosynthesis"/>
</dbReference>
<dbReference type="Proteomes" id="UP000009136">
    <property type="component" value="Chromosome 2"/>
</dbReference>
<dbReference type="Bgee" id="ENSBTAG00000035081">
    <property type="expression patterns" value="Expressed in placenta and 104 other cell types or tissues"/>
</dbReference>
<dbReference type="GO" id="GO:0016020">
    <property type="term" value="C:membrane"/>
    <property type="evidence" value="ECO:0000318"/>
    <property type="project" value="GO_Central"/>
</dbReference>
<dbReference type="GO" id="GO:0005886">
    <property type="term" value="C:plasma membrane"/>
    <property type="evidence" value="ECO:0000250"/>
    <property type="project" value="UniProtKB"/>
</dbReference>
<dbReference type="GO" id="GO:0017128">
    <property type="term" value="F:phospholipid scramblase activity"/>
    <property type="evidence" value="ECO:0000250"/>
    <property type="project" value="UniProtKB"/>
</dbReference>
<dbReference type="GO" id="GO:0017121">
    <property type="term" value="P:plasma membrane phospholipid scrambling"/>
    <property type="evidence" value="ECO:0000250"/>
    <property type="project" value="UniProtKB"/>
</dbReference>
<dbReference type="InterPro" id="IPR005016">
    <property type="entry name" value="TDE1/TMS"/>
</dbReference>
<dbReference type="PANTHER" id="PTHR10383">
    <property type="entry name" value="SERINE INCORPORATOR"/>
    <property type="match status" value="1"/>
</dbReference>
<dbReference type="PANTHER" id="PTHR10383:SF22">
    <property type="entry name" value="SERINE INCORPORATOR 2"/>
    <property type="match status" value="1"/>
</dbReference>
<dbReference type="Pfam" id="PF03348">
    <property type="entry name" value="Serinc"/>
    <property type="match status" value="1"/>
</dbReference>
<keyword id="KW-1003">Cell membrane</keyword>
<keyword id="KW-0472">Membrane</keyword>
<keyword id="KW-1185">Reference proteome</keyword>
<keyword id="KW-0812">Transmembrane</keyword>
<keyword id="KW-1133">Transmembrane helix</keyword>
<organism>
    <name type="scientific">Bos taurus</name>
    <name type="common">Bovine</name>
    <dbReference type="NCBI Taxonomy" id="9913"/>
    <lineage>
        <taxon>Eukaryota</taxon>
        <taxon>Metazoa</taxon>
        <taxon>Chordata</taxon>
        <taxon>Craniata</taxon>
        <taxon>Vertebrata</taxon>
        <taxon>Euteleostomi</taxon>
        <taxon>Mammalia</taxon>
        <taxon>Eutheria</taxon>
        <taxon>Laurasiatheria</taxon>
        <taxon>Artiodactyla</taxon>
        <taxon>Ruminantia</taxon>
        <taxon>Pecora</taxon>
        <taxon>Bovidae</taxon>
        <taxon>Bovinae</taxon>
        <taxon>Bos</taxon>
    </lineage>
</organism>
<reference key="1">
    <citation type="journal article" date="2005" name="BMC Genomics">
        <title>Characterization of 954 bovine full-CDS cDNA sequences.</title>
        <authorList>
            <person name="Harhay G.P."/>
            <person name="Sonstegard T.S."/>
            <person name="Keele J.W."/>
            <person name="Heaton M.P."/>
            <person name="Clawson M.L."/>
            <person name="Snelling W.M."/>
            <person name="Wiedmann R.T."/>
            <person name="Van Tassell C.P."/>
            <person name="Smith T.P.L."/>
        </authorList>
    </citation>
    <scope>NUCLEOTIDE SEQUENCE [LARGE SCALE MRNA]</scope>
</reference>
<proteinExistence type="evidence at transcript level"/>
<accession>Q58CW5</accession>
<protein>
    <recommendedName>
        <fullName>Serine incorporator 2</fullName>
    </recommendedName>
    <alternativeName>
        <fullName>Tumor differentially expressed protein 2-like</fullName>
    </alternativeName>
</protein>
<evidence type="ECO:0000250" key="1">
    <source>
        <dbReference type="UniProtKB" id="Q96SA4"/>
    </source>
</evidence>
<evidence type="ECO:0000255" key="2"/>
<evidence type="ECO:0000305" key="3"/>
<gene>
    <name type="primary">SERINC2</name>
    <name type="synonym">TDE2L</name>
</gene>
<comment type="function">
    <text evidence="1">Non-ATP-dependent, non-specific lipid transporter for phosphatidylserine, phosphatidylcholine, and phosphatidylethanolamine. Functions as a scramblase that flips lipids in both directions across the membrane. In contrast to SERINC3 and SERINC5, has no effect on gammaretrovirus particles infectivity.</text>
</comment>
<comment type="catalytic activity">
    <reaction evidence="1">
        <text>a 1,2-diacyl-sn-glycero-3-phospho-L-serine(in) = a 1,2-diacyl-sn-glycero-3-phospho-L-serine(out)</text>
        <dbReference type="Rhea" id="RHEA:38663"/>
        <dbReference type="ChEBI" id="CHEBI:57262"/>
    </reaction>
</comment>
<comment type="catalytic activity">
    <reaction evidence="1">
        <text>a 1,2-diacyl-sn-glycero-3-phosphocholine(in) = a 1,2-diacyl-sn-glycero-3-phosphocholine(out)</text>
        <dbReference type="Rhea" id="RHEA:38571"/>
        <dbReference type="ChEBI" id="CHEBI:57643"/>
    </reaction>
</comment>
<comment type="catalytic activity">
    <reaction evidence="1">
        <text>a 1,2-diacyl-sn-glycero-3-phosphoethanolamine(in) = a 1,2-diacyl-sn-glycero-3-phosphoethanolamine(out)</text>
        <dbReference type="Rhea" id="RHEA:38895"/>
        <dbReference type="ChEBI" id="CHEBI:64612"/>
    </reaction>
</comment>
<comment type="subcellular location">
    <subcellularLocation>
        <location evidence="1">Cell membrane</location>
        <topology evidence="2">Multi-pass membrane protein</topology>
    </subcellularLocation>
</comment>
<comment type="similarity">
    <text evidence="3">Belongs to the TDE1 family.</text>
</comment>
<name>SERC2_BOVIN</name>
<feature type="chain" id="PRO_0000236234" description="Serine incorporator 2">
    <location>
        <begin position="1"/>
        <end position="452"/>
    </location>
</feature>
<feature type="transmembrane region" description="Helical" evidence="2">
    <location>
        <begin position="5"/>
        <end position="25"/>
    </location>
</feature>
<feature type="transmembrane region" description="Helical" evidence="2">
    <location>
        <begin position="41"/>
        <end position="61"/>
    </location>
</feature>
<feature type="transmembrane region" description="Helical" evidence="2">
    <location>
        <begin position="96"/>
        <end position="116"/>
    </location>
</feature>
<feature type="transmembrane region" description="Helical" evidence="2">
    <location>
        <begin position="131"/>
        <end position="151"/>
    </location>
</feature>
<feature type="transmembrane region" description="Helical" evidence="2">
    <location>
        <begin position="158"/>
        <end position="178"/>
    </location>
</feature>
<feature type="transmembrane region" description="Helical" evidence="2">
    <location>
        <begin position="205"/>
        <end position="225"/>
    </location>
</feature>
<feature type="transmembrane region" description="Helical" evidence="2">
    <location>
        <begin position="236"/>
        <end position="256"/>
    </location>
</feature>
<feature type="transmembrane region" description="Helical" evidence="2">
    <location>
        <begin position="266"/>
        <end position="286"/>
    </location>
</feature>
<feature type="transmembrane region" description="Helical" evidence="2">
    <location>
        <begin position="319"/>
        <end position="339"/>
    </location>
</feature>
<feature type="transmembrane region" description="Helical" evidence="2">
    <location>
        <begin position="387"/>
        <end position="407"/>
    </location>
</feature>
<feature type="transmembrane region" description="Helical" evidence="2">
    <location>
        <begin position="426"/>
        <end position="446"/>
    </location>
</feature>
<sequence length="452" mass="50425">MGACLGACSLLSCASCLCGSAPCILCSCCPCSHNSTLSRLFFTVFLFLGVLVCVIMLSPGVESQLYKLPWVCNEGTGSHVVLQGHIDCGSLLGHRAVYRMCFAMAAFFFLFSLLMVCVRSSRDPRAAIQNGFWFFKFLIFVGITVGAFYIPDGSFSNIWFYFGVVGSFIFLLIQLLLLIDFAHSWNQRWLCKAEECDSRAWYAGLFFFTLLFYALSITAVALLFVYYTQPGACYEGKVFIGLNLTLCVCVSIVAILPKIQDAQPNSGLLQASVITLYTMFVTWLALSNVPDQKCNPHLLTHFGNGTVLAGPEGYETHWWDAPSIVGLVVFILCTVFISLRSSDHRQVNSLMQTEECPPVLDATQQQVVSEGRAFDNEQDGVTYSYSFFHLCLVLASVHIMMTLTNWYRPGETRKMISTWTAVWVKICASWTGLLLYLWTLVAPLLLPNRDFS</sequence>